<protein>
    <recommendedName>
        <fullName evidence="1">Cytochrome c-type biogenesis protein CcmE</fullName>
    </recommendedName>
    <alternativeName>
        <fullName evidence="1">Cytochrome c maturation protein E</fullName>
    </alternativeName>
    <alternativeName>
        <fullName evidence="1">Heme chaperone CcmE</fullName>
    </alternativeName>
</protein>
<comment type="function">
    <text evidence="1">Heme chaperone required for the biogenesis of c-type cytochromes. Transiently binds heme delivered by CcmC and transfers the heme to apo-cytochromes in a process facilitated by CcmF and CcmH.</text>
</comment>
<comment type="subcellular location">
    <subcellularLocation>
        <location evidence="1">Cell inner membrane</location>
        <topology evidence="1">Single-pass type II membrane protein</topology>
        <orientation evidence="1">Periplasmic side</orientation>
    </subcellularLocation>
</comment>
<comment type="similarity">
    <text evidence="1">Belongs to the CcmE/CycJ family.</text>
</comment>
<proteinExistence type="inferred from homology"/>
<feature type="chain" id="PRO_0000201579" description="Cytochrome c-type biogenesis protein CcmE">
    <location>
        <begin position="1"/>
        <end position="159"/>
    </location>
</feature>
<feature type="topological domain" description="Cytoplasmic" evidence="1">
    <location>
        <begin position="1"/>
        <end position="8"/>
    </location>
</feature>
<feature type="transmembrane region" description="Helical; Signal-anchor for type II membrane protein" evidence="1">
    <location>
        <begin position="9"/>
        <end position="29"/>
    </location>
</feature>
<feature type="topological domain" description="Periplasmic" evidence="1">
    <location>
        <begin position="30"/>
        <end position="159"/>
    </location>
</feature>
<feature type="region of interest" description="Disordered" evidence="2">
    <location>
        <begin position="132"/>
        <end position="159"/>
    </location>
</feature>
<feature type="compositionally biased region" description="Basic and acidic residues" evidence="2">
    <location>
        <begin position="132"/>
        <end position="147"/>
    </location>
</feature>
<feature type="binding site" description="covalent" evidence="1">
    <location>
        <position position="130"/>
    </location>
    <ligand>
        <name>heme</name>
        <dbReference type="ChEBI" id="CHEBI:30413"/>
    </ligand>
</feature>
<feature type="binding site" description="axial binding residue" evidence="1">
    <location>
        <position position="134"/>
    </location>
    <ligand>
        <name>heme</name>
        <dbReference type="ChEBI" id="CHEBI:30413"/>
    </ligand>
    <ligandPart>
        <name>Fe</name>
        <dbReference type="ChEBI" id="CHEBI:18248"/>
    </ligandPart>
</feature>
<dbReference type="EMBL" id="AE005674">
    <property type="protein sequence ID" value="AAN43800.1"/>
    <property type="molecule type" value="Genomic_DNA"/>
</dbReference>
<dbReference type="EMBL" id="AE014073">
    <property type="protein sequence ID" value="AAP17617.1"/>
    <property type="molecule type" value="Genomic_DNA"/>
</dbReference>
<dbReference type="RefSeq" id="NP_708093.1">
    <property type="nucleotide sequence ID" value="NC_004337.2"/>
</dbReference>
<dbReference type="RefSeq" id="WP_001026418.1">
    <property type="nucleotide sequence ID" value="NZ_WPGW01000022.1"/>
</dbReference>
<dbReference type="SMR" id="P69493"/>
<dbReference type="STRING" id="198214.SF2281"/>
<dbReference type="PaxDb" id="198214-SF2281"/>
<dbReference type="GeneID" id="1025436"/>
<dbReference type="GeneID" id="86860369"/>
<dbReference type="KEGG" id="sfl:SF2281"/>
<dbReference type="KEGG" id="sfx:S2411"/>
<dbReference type="PATRIC" id="fig|198214.7.peg.2732"/>
<dbReference type="HOGENOM" id="CLU_079503_1_0_6"/>
<dbReference type="Proteomes" id="UP000001006">
    <property type="component" value="Chromosome"/>
</dbReference>
<dbReference type="Proteomes" id="UP000002673">
    <property type="component" value="Chromosome"/>
</dbReference>
<dbReference type="GO" id="GO:0005886">
    <property type="term" value="C:plasma membrane"/>
    <property type="evidence" value="ECO:0007669"/>
    <property type="project" value="UniProtKB-SubCell"/>
</dbReference>
<dbReference type="GO" id="GO:0020037">
    <property type="term" value="F:heme binding"/>
    <property type="evidence" value="ECO:0007669"/>
    <property type="project" value="InterPro"/>
</dbReference>
<dbReference type="GO" id="GO:0046872">
    <property type="term" value="F:metal ion binding"/>
    <property type="evidence" value="ECO:0007669"/>
    <property type="project" value="UniProtKB-KW"/>
</dbReference>
<dbReference type="GO" id="GO:0017004">
    <property type="term" value="P:cytochrome complex assembly"/>
    <property type="evidence" value="ECO:0007669"/>
    <property type="project" value="UniProtKB-KW"/>
</dbReference>
<dbReference type="FunFam" id="2.40.50.140:FF:000104">
    <property type="entry name" value="Cytochrome c-type biogenesis protein CcmE"/>
    <property type="match status" value="1"/>
</dbReference>
<dbReference type="Gene3D" id="2.40.50.140">
    <property type="entry name" value="Nucleic acid-binding proteins"/>
    <property type="match status" value="1"/>
</dbReference>
<dbReference type="HAMAP" id="MF_01959">
    <property type="entry name" value="CcmE"/>
    <property type="match status" value="1"/>
</dbReference>
<dbReference type="InterPro" id="IPR004329">
    <property type="entry name" value="CcmE"/>
</dbReference>
<dbReference type="InterPro" id="IPR036127">
    <property type="entry name" value="CcmE-like_sf"/>
</dbReference>
<dbReference type="InterPro" id="IPR012340">
    <property type="entry name" value="NA-bd_OB-fold"/>
</dbReference>
<dbReference type="NCBIfam" id="NF009635">
    <property type="entry name" value="PRK13150.1"/>
    <property type="match status" value="1"/>
</dbReference>
<dbReference type="NCBIfam" id="NF009638">
    <property type="entry name" value="PRK13165.1"/>
    <property type="match status" value="1"/>
</dbReference>
<dbReference type="NCBIfam" id="NF009727">
    <property type="entry name" value="PRK13254.1-1"/>
    <property type="match status" value="1"/>
</dbReference>
<dbReference type="NCBIfam" id="NF009729">
    <property type="entry name" value="PRK13254.1-3"/>
    <property type="match status" value="1"/>
</dbReference>
<dbReference type="PANTHER" id="PTHR34128">
    <property type="entry name" value="CYTOCHROME C-TYPE BIOGENESIS PROTEIN CCME HOMOLOG, MITOCHONDRIAL"/>
    <property type="match status" value="1"/>
</dbReference>
<dbReference type="PANTHER" id="PTHR34128:SF2">
    <property type="entry name" value="CYTOCHROME C-TYPE BIOGENESIS PROTEIN CCME HOMOLOG, MITOCHONDRIAL"/>
    <property type="match status" value="1"/>
</dbReference>
<dbReference type="Pfam" id="PF03100">
    <property type="entry name" value="CcmE"/>
    <property type="match status" value="1"/>
</dbReference>
<dbReference type="SUPFAM" id="SSF82093">
    <property type="entry name" value="Heme chaperone CcmE"/>
    <property type="match status" value="1"/>
</dbReference>
<sequence length="159" mass="17698">MNIRRKNRLWIACAVLAGLALTIGLVLYALRSNIDLFYTPGEILYGKRETQQMPEVGQRLRVGGMVMPGSVQRDPNSLKVTFTIYDAEGSVDVSYEGILPDLFREGQGVVVQGELEKGNHILAKEVLAKHDENYTPPEVEKAMEANHRRPASVYKDPAS</sequence>
<evidence type="ECO:0000255" key="1">
    <source>
        <dbReference type="HAMAP-Rule" id="MF_01959"/>
    </source>
</evidence>
<evidence type="ECO:0000256" key="2">
    <source>
        <dbReference type="SAM" id="MobiDB-lite"/>
    </source>
</evidence>
<accession>P69493</accession>
<accession>P33928</accession>
<name>CCME_SHIFL</name>
<organism>
    <name type="scientific">Shigella flexneri</name>
    <dbReference type="NCBI Taxonomy" id="623"/>
    <lineage>
        <taxon>Bacteria</taxon>
        <taxon>Pseudomonadati</taxon>
        <taxon>Pseudomonadota</taxon>
        <taxon>Gammaproteobacteria</taxon>
        <taxon>Enterobacterales</taxon>
        <taxon>Enterobacteriaceae</taxon>
        <taxon>Shigella</taxon>
    </lineage>
</organism>
<gene>
    <name evidence="1" type="primary">ccmE</name>
    <name evidence="1" type="synonym">cycJ</name>
    <name type="ordered locus">SF2281</name>
    <name type="ordered locus">S2411</name>
</gene>
<reference key="1">
    <citation type="journal article" date="2002" name="Nucleic Acids Res.">
        <title>Genome sequence of Shigella flexneri 2a: insights into pathogenicity through comparison with genomes of Escherichia coli K12 and O157.</title>
        <authorList>
            <person name="Jin Q."/>
            <person name="Yuan Z."/>
            <person name="Xu J."/>
            <person name="Wang Y."/>
            <person name="Shen Y."/>
            <person name="Lu W."/>
            <person name="Wang J."/>
            <person name="Liu H."/>
            <person name="Yang J."/>
            <person name="Yang F."/>
            <person name="Zhang X."/>
            <person name="Zhang J."/>
            <person name="Yang G."/>
            <person name="Wu H."/>
            <person name="Qu D."/>
            <person name="Dong J."/>
            <person name="Sun L."/>
            <person name="Xue Y."/>
            <person name="Zhao A."/>
            <person name="Gao Y."/>
            <person name="Zhu J."/>
            <person name="Kan B."/>
            <person name="Ding K."/>
            <person name="Chen S."/>
            <person name="Cheng H."/>
            <person name="Yao Z."/>
            <person name="He B."/>
            <person name="Chen R."/>
            <person name="Ma D."/>
            <person name="Qiang B."/>
            <person name="Wen Y."/>
            <person name="Hou Y."/>
            <person name="Yu J."/>
        </authorList>
    </citation>
    <scope>NUCLEOTIDE SEQUENCE [LARGE SCALE GENOMIC DNA]</scope>
    <source>
        <strain>301 / Serotype 2a</strain>
    </source>
</reference>
<reference key="2">
    <citation type="journal article" date="2003" name="Infect. Immun.">
        <title>Complete genome sequence and comparative genomics of Shigella flexneri serotype 2a strain 2457T.</title>
        <authorList>
            <person name="Wei J."/>
            <person name="Goldberg M.B."/>
            <person name="Burland V."/>
            <person name="Venkatesan M.M."/>
            <person name="Deng W."/>
            <person name="Fournier G."/>
            <person name="Mayhew G.F."/>
            <person name="Plunkett G. III"/>
            <person name="Rose D.J."/>
            <person name="Darling A."/>
            <person name="Mau B."/>
            <person name="Perna N.T."/>
            <person name="Payne S.M."/>
            <person name="Runyen-Janecky L.J."/>
            <person name="Zhou S."/>
            <person name="Schwartz D.C."/>
            <person name="Blattner F.R."/>
        </authorList>
    </citation>
    <scope>NUCLEOTIDE SEQUENCE [LARGE SCALE GENOMIC DNA]</scope>
    <source>
        <strain>ATCC 700930 / 2457T / Serotype 2a</strain>
    </source>
</reference>
<keyword id="KW-0997">Cell inner membrane</keyword>
<keyword id="KW-1003">Cell membrane</keyword>
<keyword id="KW-0201">Cytochrome c-type biogenesis</keyword>
<keyword id="KW-0349">Heme</keyword>
<keyword id="KW-0408">Iron</keyword>
<keyword id="KW-0472">Membrane</keyword>
<keyword id="KW-0479">Metal-binding</keyword>
<keyword id="KW-1185">Reference proteome</keyword>
<keyword id="KW-0735">Signal-anchor</keyword>
<keyword id="KW-0812">Transmembrane</keyword>
<keyword id="KW-1133">Transmembrane helix</keyword>